<comment type="function">
    <text evidence="1">Catalyzes the oxidation of 5,10-methylenetetrahydrofolate to 5,10-methenyltetrahydrofolate and then the hydrolysis of 5,10-methenyltetrahydrofolate to 10-formyltetrahydrofolate.</text>
</comment>
<comment type="catalytic activity">
    <reaction evidence="1">
        <text>(6R)-5,10-methylene-5,6,7,8-tetrahydrofolate + NADP(+) = (6R)-5,10-methenyltetrahydrofolate + NADPH</text>
        <dbReference type="Rhea" id="RHEA:22812"/>
        <dbReference type="ChEBI" id="CHEBI:15636"/>
        <dbReference type="ChEBI" id="CHEBI:57455"/>
        <dbReference type="ChEBI" id="CHEBI:57783"/>
        <dbReference type="ChEBI" id="CHEBI:58349"/>
        <dbReference type="EC" id="1.5.1.5"/>
    </reaction>
</comment>
<comment type="catalytic activity">
    <reaction evidence="1">
        <text>(6R)-5,10-methenyltetrahydrofolate + H2O = (6R)-10-formyltetrahydrofolate + H(+)</text>
        <dbReference type="Rhea" id="RHEA:23700"/>
        <dbReference type="ChEBI" id="CHEBI:15377"/>
        <dbReference type="ChEBI" id="CHEBI:15378"/>
        <dbReference type="ChEBI" id="CHEBI:57455"/>
        <dbReference type="ChEBI" id="CHEBI:195366"/>
        <dbReference type="EC" id="3.5.4.9"/>
    </reaction>
</comment>
<comment type="pathway">
    <text evidence="1">One-carbon metabolism; tetrahydrofolate interconversion.</text>
</comment>
<comment type="subunit">
    <text evidence="1">Homodimer.</text>
</comment>
<comment type="similarity">
    <text evidence="1">Belongs to the tetrahydrofolate dehydrogenase/cyclohydrolase family.</text>
</comment>
<comment type="sequence caution" evidence="2">
    <conflict type="erroneous initiation">
        <sequence resource="EMBL-CDS" id="AAV62207"/>
    </conflict>
</comment>
<organism>
    <name type="scientific">Streptococcus thermophilus (strain CNRZ 1066)</name>
    <dbReference type="NCBI Taxonomy" id="299768"/>
    <lineage>
        <taxon>Bacteria</taxon>
        <taxon>Bacillati</taxon>
        <taxon>Bacillota</taxon>
        <taxon>Bacilli</taxon>
        <taxon>Lactobacillales</taxon>
        <taxon>Streptococcaceae</taxon>
        <taxon>Streptococcus</taxon>
    </lineage>
</organism>
<dbReference type="EC" id="1.5.1.5" evidence="1"/>
<dbReference type="EC" id="3.5.4.9" evidence="1"/>
<dbReference type="EMBL" id="CP000024">
    <property type="protein sequence ID" value="AAV62207.1"/>
    <property type="status" value="ALT_INIT"/>
    <property type="molecule type" value="Genomic_DNA"/>
</dbReference>
<dbReference type="RefSeq" id="WP_041826990.1">
    <property type="nucleotide sequence ID" value="NC_006449.1"/>
</dbReference>
<dbReference type="SMR" id="Q5M0P7"/>
<dbReference type="KEGG" id="stc:str0611"/>
<dbReference type="HOGENOM" id="CLU_034045_2_1_9"/>
<dbReference type="UniPathway" id="UPA00193"/>
<dbReference type="GO" id="GO:0005829">
    <property type="term" value="C:cytosol"/>
    <property type="evidence" value="ECO:0007669"/>
    <property type="project" value="TreeGrafter"/>
</dbReference>
<dbReference type="GO" id="GO:0004477">
    <property type="term" value="F:methenyltetrahydrofolate cyclohydrolase activity"/>
    <property type="evidence" value="ECO:0007669"/>
    <property type="project" value="UniProtKB-UniRule"/>
</dbReference>
<dbReference type="GO" id="GO:0004488">
    <property type="term" value="F:methylenetetrahydrofolate dehydrogenase (NADP+) activity"/>
    <property type="evidence" value="ECO:0007669"/>
    <property type="project" value="UniProtKB-UniRule"/>
</dbReference>
<dbReference type="GO" id="GO:0000105">
    <property type="term" value="P:L-histidine biosynthetic process"/>
    <property type="evidence" value="ECO:0007669"/>
    <property type="project" value="UniProtKB-KW"/>
</dbReference>
<dbReference type="GO" id="GO:0009086">
    <property type="term" value="P:methionine biosynthetic process"/>
    <property type="evidence" value="ECO:0007669"/>
    <property type="project" value="UniProtKB-KW"/>
</dbReference>
<dbReference type="GO" id="GO:0006164">
    <property type="term" value="P:purine nucleotide biosynthetic process"/>
    <property type="evidence" value="ECO:0007669"/>
    <property type="project" value="UniProtKB-KW"/>
</dbReference>
<dbReference type="GO" id="GO:0035999">
    <property type="term" value="P:tetrahydrofolate interconversion"/>
    <property type="evidence" value="ECO:0007669"/>
    <property type="project" value="UniProtKB-UniRule"/>
</dbReference>
<dbReference type="CDD" id="cd01080">
    <property type="entry name" value="NAD_bind_m-THF_DH_Cyclohyd"/>
    <property type="match status" value="1"/>
</dbReference>
<dbReference type="FunFam" id="3.40.50.720:FF:000094">
    <property type="entry name" value="Bifunctional protein FolD"/>
    <property type="match status" value="1"/>
</dbReference>
<dbReference type="FunFam" id="3.40.50.10860:FF:000005">
    <property type="entry name" value="C-1-tetrahydrofolate synthase, cytoplasmic, putative"/>
    <property type="match status" value="1"/>
</dbReference>
<dbReference type="Gene3D" id="3.40.50.10860">
    <property type="entry name" value="Leucine Dehydrogenase, chain A, domain 1"/>
    <property type="match status" value="1"/>
</dbReference>
<dbReference type="Gene3D" id="3.40.50.720">
    <property type="entry name" value="NAD(P)-binding Rossmann-like Domain"/>
    <property type="match status" value="1"/>
</dbReference>
<dbReference type="HAMAP" id="MF_01576">
    <property type="entry name" value="THF_DHG_CYH"/>
    <property type="match status" value="1"/>
</dbReference>
<dbReference type="InterPro" id="IPR046346">
    <property type="entry name" value="Aminoacid_DH-like_N_sf"/>
</dbReference>
<dbReference type="InterPro" id="IPR036291">
    <property type="entry name" value="NAD(P)-bd_dom_sf"/>
</dbReference>
<dbReference type="InterPro" id="IPR000672">
    <property type="entry name" value="THF_DH/CycHdrlase"/>
</dbReference>
<dbReference type="InterPro" id="IPR020630">
    <property type="entry name" value="THF_DH/CycHdrlase_cat_dom"/>
</dbReference>
<dbReference type="InterPro" id="IPR020867">
    <property type="entry name" value="THF_DH/CycHdrlase_CS"/>
</dbReference>
<dbReference type="InterPro" id="IPR020631">
    <property type="entry name" value="THF_DH/CycHdrlase_NAD-bd_dom"/>
</dbReference>
<dbReference type="NCBIfam" id="NF008058">
    <property type="entry name" value="PRK10792.1"/>
    <property type="match status" value="1"/>
</dbReference>
<dbReference type="NCBIfam" id="NF010776">
    <property type="entry name" value="PRK14179.1"/>
    <property type="match status" value="1"/>
</dbReference>
<dbReference type="NCBIfam" id="NF010783">
    <property type="entry name" value="PRK14186.1"/>
    <property type="match status" value="1"/>
</dbReference>
<dbReference type="PANTHER" id="PTHR48099:SF5">
    <property type="entry name" value="C-1-TETRAHYDROFOLATE SYNTHASE, CYTOPLASMIC"/>
    <property type="match status" value="1"/>
</dbReference>
<dbReference type="PANTHER" id="PTHR48099">
    <property type="entry name" value="C-1-TETRAHYDROFOLATE SYNTHASE, CYTOPLASMIC-RELATED"/>
    <property type="match status" value="1"/>
</dbReference>
<dbReference type="Pfam" id="PF00763">
    <property type="entry name" value="THF_DHG_CYH"/>
    <property type="match status" value="1"/>
</dbReference>
<dbReference type="Pfam" id="PF02882">
    <property type="entry name" value="THF_DHG_CYH_C"/>
    <property type="match status" value="1"/>
</dbReference>
<dbReference type="PRINTS" id="PR00085">
    <property type="entry name" value="THFDHDRGNASE"/>
</dbReference>
<dbReference type="SUPFAM" id="SSF53223">
    <property type="entry name" value="Aminoacid dehydrogenase-like, N-terminal domain"/>
    <property type="match status" value="1"/>
</dbReference>
<dbReference type="SUPFAM" id="SSF51735">
    <property type="entry name" value="NAD(P)-binding Rossmann-fold domains"/>
    <property type="match status" value="1"/>
</dbReference>
<dbReference type="PROSITE" id="PS00766">
    <property type="entry name" value="THF_DHG_CYH_1"/>
    <property type="match status" value="1"/>
</dbReference>
<dbReference type="PROSITE" id="PS00767">
    <property type="entry name" value="THF_DHG_CYH_2"/>
    <property type="match status" value="1"/>
</dbReference>
<gene>
    <name evidence="1" type="primary">folD</name>
    <name type="ordered locus">str0611</name>
</gene>
<proteinExistence type="inferred from homology"/>
<evidence type="ECO:0000255" key="1">
    <source>
        <dbReference type="HAMAP-Rule" id="MF_01576"/>
    </source>
</evidence>
<evidence type="ECO:0000305" key="2"/>
<name>FOLD_STRT1</name>
<keyword id="KW-0028">Amino-acid biosynthesis</keyword>
<keyword id="KW-0368">Histidine biosynthesis</keyword>
<keyword id="KW-0378">Hydrolase</keyword>
<keyword id="KW-0486">Methionine biosynthesis</keyword>
<keyword id="KW-0511">Multifunctional enzyme</keyword>
<keyword id="KW-0521">NADP</keyword>
<keyword id="KW-0554">One-carbon metabolism</keyword>
<keyword id="KW-0560">Oxidoreductase</keyword>
<keyword id="KW-0658">Purine biosynthesis</keyword>
<reference key="1">
    <citation type="journal article" date="2004" name="Nat. Biotechnol.">
        <title>Complete sequence and comparative genome analysis of the dairy bacterium Streptococcus thermophilus.</title>
        <authorList>
            <person name="Bolotin A."/>
            <person name="Quinquis B."/>
            <person name="Renault P."/>
            <person name="Sorokin A."/>
            <person name="Ehrlich S.D."/>
            <person name="Kulakauskas S."/>
            <person name="Lapidus A."/>
            <person name="Goltsman E."/>
            <person name="Mazur M."/>
            <person name="Pusch G.D."/>
            <person name="Fonstein M."/>
            <person name="Overbeek R."/>
            <person name="Kyprides N."/>
            <person name="Purnelle B."/>
            <person name="Prozzi D."/>
            <person name="Ngui K."/>
            <person name="Masuy D."/>
            <person name="Hancy F."/>
            <person name="Burteau S."/>
            <person name="Boutry M."/>
            <person name="Delcour J."/>
            <person name="Goffeau A."/>
            <person name="Hols P."/>
        </authorList>
    </citation>
    <scope>NUCLEOTIDE SEQUENCE [LARGE SCALE GENOMIC DNA]</scope>
    <source>
        <strain>CNRZ 1066</strain>
    </source>
</reference>
<accession>Q5M0P7</accession>
<protein>
    <recommendedName>
        <fullName evidence="1">Bifunctional protein FolD</fullName>
    </recommendedName>
    <domain>
        <recommendedName>
            <fullName evidence="1">Methylenetetrahydrofolate dehydrogenase</fullName>
            <ecNumber evidence="1">1.5.1.5</ecNumber>
        </recommendedName>
    </domain>
    <domain>
        <recommendedName>
            <fullName evidence="1">Methenyltetrahydrofolate cyclohydrolase</fullName>
            <ecNumber evidence="1">3.5.4.9</ecNumber>
        </recommendedName>
    </domain>
</protein>
<feature type="chain" id="PRO_0000268524" description="Bifunctional protein FolD">
    <location>
        <begin position="1"/>
        <end position="284"/>
    </location>
</feature>
<feature type="binding site" evidence="1">
    <location>
        <begin position="165"/>
        <end position="167"/>
    </location>
    <ligand>
        <name>NADP(+)</name>
        <dbReference type="ChEBI" id="CHEBI:58349"/>
    </ligand>
</feature>
<feature type="binding site" evidence="1">
    <location>
        <position position="190"/>
    </location>
    <ligand>
        <name>NADP(+)</name>
        <dbReference type="ChEBI" id="CHEBI:58349"/>
    </ligand>
</feature>
<feature type="binding site" evidence="1">
    <location>
        <position position="231"/>
    </location>
    <ligand>
        <name>NADP(+)</name>
        <dbReference type="ChEBI" id="CHEBI:58349"/>
    </ligand>
</feature>
<sequence>MAIIMDGKALAVNMQEQLQEKVARLKEKEWIVPGLVVIMVGENPASQVYVRNKERAAKKAGFHSKTVNLSESISEEELIEVIEKYNQNPLFHGILVQLPLPNHINEMRILLAIDPKKDVDGFHPMNTGNLWNGRPQMVPCTPAGIMEILREYNVELEGKTAVIIGRSNIVGKPMAQLLLEKNATVTLTHSRTPHLAKVCNKADVLIVAIGRAKFVTEEFVKEGAVVIDVGINRDEEGKLCGDVDFDQVKEKVSMITPVPGGVGPMTITMLMEQTYQAALRSLKG</sequence>